<feature type="chain" id="PRO_1000067983" description="Large ribosomal subunit protein uL6">
    <location>
        <begin position="1"/>
        <end position="184"/>
    </location>
</feature>
<sequence>MSKLGKKPILIPSGVQINIEGDMISVKGPKGTLSQRLSPYIKVAIEENKLWVQQNEESIVRRSQRKMLRTFQGTYWSLIKNMITGVTEGFEKQLEIVGVGYRAQLQGNKVSLQLGYTHPIVLEPPVGVSVEVPAPNVVVVKGIDKQKVGQFAAEVRSWRKVNVYSGKGVKYRNEVVKLKEGKKA</sequence>
<proteinExistence type="inferred from homology"/>
<gene>
    <name evidence="1" type="primary">rplF</name>
    <name type="ordered locus">Tlet_0594</name>
</gene>
<comment type="function">
    <text evidence="1">This protein binds to the 23S rRNA, and is important in its secondary structure. It is located near the subunit interface in the base of the L7/L12 stalk, and near the tRNA binding site of the peptidyltransferase center.</text>
</comment>
<comment type="subunit">
    <text evidence="1">Part of the 50S ribosomal subunit.</text>
</comment>
<comment type="similarity">
    <text evidence="1">Belongs to the universal ribosomal protein uL6 family.</text>
</comment>
<evidence type="ECO:0000255" key="1">
    <source>
        <dbReference type="HAMAP-Rule" id="MF_01365"/>
    </source>
</evidence>
<evidence type="ECO:0000305" key="2"/>
<keyword id="KW-1185">Reference proteome</keyword>
<keyword id="KW-0687">Ribonucleoprotein</keyword>
<keyword id="KW-0689">Ribosomal protein</keyword>
<keyword id="KW-0694">RNA-binding</keyword>
<keyword id="KW-0699">rRNA-binding</keyword>
<reference key="1">
    <citation type="submission" date="2007-08" db="EMBL/GenBank/DDBJ databases">
        <title>Complete sequence of Thermotoga lettingae TMO.</title>
        <authorList>
            <consortium name="US DOE Joint Genome Institute"/>
            <person name="Copeland A."/>
            <person name="Lucas S."/>
            <person name="Lapidus A."/>
            <person name="Barry K."/>
            <person name="Glavina del Rio T."/>
            <person name="Dalin E."/>
            <person name="Tice H."/>
            <person name="Pitluck S."/>
            <person name="Foster B."/>
            <person name="Bruce D."/>
            <person name="Schmutz J."/>
            <person name="Larimer F."/>
            <person name="Land M."/>
            <person name="Hauser L."/>
            <person name="Kyrpides N."/>
            <person name="Mikhailova N."/>
            <person name="Nelson K."/>
            <person name="Gogarten J.P."/>
            <person name="Noll K."/>
            <person name="Richardson P."/>
        </authorList>
    </citation>
    <scope>NUCLEOTIDE SEQUENCE [LARGE SCALE GENOMIC DNA]</scope>
    <source>
        <strain>ATCC BAA-301 / DSM 14385 / NBRC 107922 / TMO</strain>
    </source>
</reference>
<name>RL6_PSELT</name>
<accession>A8F4S6</accession>
<organism>
    <name type="scientific">Pseudothermotoga lettingae (strain ATCC BAA-301 / DSM 14385 / NBRC 107922 / TMO)</name>
    <name type="common">Thermotoga lettingae</name>
    <dbReference type="NCBI Taxonomy" id="416591"/>
    <lineage>
        <taxon>Bacteria</taxon>
        <taxon>Thermotogati</taxon>
        <taxon>Thermotogota</taxon>
        <taxon>Thermotogae</taxon>
        <taxon>Thermotogales</taxon>
        <taxon>Thermotogaceae</taxon>
        <taxon>Pseudothermotoga</taxon>
    </lineage>
</organism>
<dbReference type="EMBL" id="CP000812">
    <property type="protein sequence ID" value="ABV33160.1"/>
    <property type="molecule type" value="Genomic_DNA"/>
</dbReference>
<dbReference type="RefSeq" id="WP_012002641.1">
    <property type="nucleotide sequence ID" value="NC_009828.1"/>
</dbReference>
<dbReference type="SMR" id="A8F4S6"/>
<dbReference type="STRING" id="416591.Tlet_0594"/>
<dbReference type="KEGG" id="tle:Tlet_0594"/>
<dbReference type="eggNOG" id="COG0097">
    <property type="taxonomic scope" value="Bacteria"/>
</dbReference>
<dbReference type="HOGENOM" id="CLU_065464_1_2_0"/>
<dbReference type="OrthoDB" id="9805007at2"/>
<dbReference type="Proteomes" id="UP000002016">
    <property type="component" value="Chromosome"/>
</dbReference>
<dbReference type="GO" id="GO:0022625">
    <property type="term" value="C:cytosolic large ribosomal subunit"/>
    <property type="evidence" value="ECO:0007669"/>
    <property type="project" value="TreeGrafter"/>
</dbReference>
<dbReference type="GO" id="GO:0019843">
    <property type="term" value="F:rRNA binding"/>
    <property type="evidence" value="ECO:0007669"/>
    <property type="project" value="UniProtKB-UniRule"/>
</dbReference>
<dbReference type="GO" id="GO:0003735">
    <property type="term" value="F:structural constituent of ribosome"/>
    <property type="evidence" value="ECO:0007669"/>
    <property type="project" value="InterPro"/>
</dbReference>
<dbReference type="GO" id="GO:0002181">
    <property type="term" value="P:cytoplasmic translation"/>
    <property type="evidence" value="ECO:0007669"/>
    <property type="project" value="TreeGrafter"/>
</dbReference>
<dbReference type="FunFam" id="3.90.930.12:FF:000001">
    <property type="entry name" value="50S ribosomal protein L6"/>
    <property type="match status" value="1"/>
</dbReference>
<dbReference type="FunFam" id="3.90.930.12:FF:000002">
    <property type="entry name" value="50S ribosomal protein L6"/>
    <property type="match status" value="1"/>
</dbReference>
<dbReference type="Gene3D" id="3.90.930.12">
    <property type="entry name" value="Ribosomal protein L6, alpha-beta domain"/>
    <property type="match status" value="2"/>
</dbReference>
<dbReference type="HAMAP" id="MF_01365_B">
    <property type="entry name" value="Ribosomal_uL6_B"/>
    <property type="match status" value="1"/>
</dbReference>
<dbReference type="InterPro" id="IPR000702">
    <property type="entry name" value="Ribosomal_uL6-like"/>
</dbReference>
<dbReference type="InterPro" id="IPR036789">
    <property type="entry name" value="Ribosomal_uL6-like_a/b-dom_sf"/>
</dbReference>
<dbReference type="InterPro" id="IPR020040">
    <property type="entry name" value="Ribosomal_uL6_a/b-dom"/>
</dbReference>
<dbReference type="InterPro" id="IPR019906">
    <property type="entry name" value="Ribosomal_uL6_bac-type"/>
</dbReference>
<dbReference type="NCBIfam" id="TIGR03654">
    <property type="entry name" value="L6_bact"/>
    <property type="match status" value="1"/>
</dbReference>
<dbReference type="PANTHER" id="PTHR11655">
    <property type="entry name" value="60S/50S RIBOSOMAL PROTEIN L6/L9"/>
    <property type="match status" value="1"/>
</dbReference>
<dbReference type="PANTHER" id="PTHR11655:SF14">
    <property type="entry name" value="LARGE RIBOSOMAL SUBUNIT PROTEIN UL6M"/>
    <property type="match status" value="1"/>
</dbReference>
<dbReference type="Pfam" id="PF00347">
    <property type="entry name" value="Ribosomal_L6"/>
    <property type="match status" value="2"/>
</dbReference>
<dbReference type="PIRSF" id="PIRSF002162">
    <property type="entry name" value="Ribosomal_L6"/>
    <property type="match status" value="1"/>
</dbReference>
<dbReference type="PRINTS" id="PR00059">
    <property type="entry name" value="RIBOSOMALL6"/>
</dbReference>
<dbReference type="SUPFAM" id="SSF56053">
    <property type="entry name" value="Ribosomal protein L6"/>
    <property type="match status" value="2"/>
</dbReference>
<protein>
    <recommendedName>
        <fullName evidence="1">Large ribosomal subunit protein uL6</fullName>
    </recommendedName>
    <alternativeName>
        <fullName evidence="2">50S ribosomal protein L6</fullName>
    </alternativeName>
</protein>